<feature type="chain" id="PRO_1000088080" description="Fatty acid oxidation complex subunit alpha">
    <location>
        <begin position="1"/>
        <end position="715"/>
    </location>
</feature>
<feature type="region of interest" description="Enoyl-CoA hydratase/isomerase" evidence="1">
    <location>
        <begin position="1"/>
        <end position="190"/>
    </location>
</feature>
<feature type="region of interest" description="3-hydroxyacyl-CoA dehydrogenase" evidence="1">
    <location>
        <begin position="312"/>
        <end position="715"/>
    </location>
</feature>
<feature type="active site" description="For 3-hydroxyacyl-CoA dehydrogenase activity" evidence="1">
    <location>
        <position position="451"/>
    </location>
</feature>
<feature type="binding site" evidence="1">
    <location>
        <position position="297"/>
    </location>
    <ligand>
        <name>substrate</name>
    </ligand>
</feature>
<feature type="binding site" evidence="1">
    <location>
        <position position="325"/>
    </location>
    <ligand>
        <name>NAD(+)</name>
        <dbReference type="ChEBI" id="CHEBI:57540"/>
    </ligand>
</feature>
<feature type="binding site" evidence="1">
    <location>
        <position position="344"/>
    </location>
    <ligand>
        <name>NAD(+)</name>
        <dbReference type="ChEBI" id="CHEBI:57540"/>
    </ligand>
</feature>
<feature type="binding site" evidence="1">
    <location>
        <begin position="401"/>
        <end position="403"/>
    </location>
    <ligand>
        <name>NAD(+)</name>
        <dbReference type="ChEBI" id="CHEBI:57540"/>
    </ligand>
</feature>
<feature type="binding site" evidence="1">
    <location>
        <position position="408"/>
    </location>
    <ligand>
        <name>NAD(+)</name>
        <dbReference type="ChEBI" id="CHEBI:57540"/>
    </ligand>
</feature>
<feature type="binding site" evidence="1">
    <location>
        <position position="430"/>
    </location>
    <ligand>
        <name>NAD(+)</name>
        <dbReference type="ChEBI" id="CHEBI:57540"/>
    </ligand>
</feature>
<feature type="binding site" evidence="1">
    <location>
        <position position="454"/>
    </location>
    <ligand>
        <name>NAD(+)</name>
        <dbReference type="ChEBI" id="CHEBI:57540"/>
    </ligand>
</feature>
<feature type="binding site" evidence="1">
    <location>
        <position position="501"/>
    </location>
    <ligand>
        <name>substrate</name>
    </ligand>
</feature>
<feature type="binding site" evidence="1">
    <location>
        <position position="660"/>
    </location>
    <ligand>
        <name>substrate</name>
    </ligand>
</feature>
<feature type="site" description="Important for catalytic activity" evidence="1">
    <location>
        <position position="120"/>
    </location>
</feature>
<feature type="site" description="Important for catalytic activity" evidence="1">
    <location>
        <position position="140"/>
    </location>
</feature>
<keyword id="KW-0276">Fatty acid metabolism</keyword>
<keyword id="KW-0413">Isomerase</keyword>
<keyword id="KW-0442">Lipid degradation</keyword>
<keyword id="KW-0443">Lipid metabolism</keyword>
<keyword id="KW-0456">Lyase</keyword>
<keyword id="KW-0511">Multifunctional enzyme</keyword>
<keyword id="KW-0520">NAD</keyword>
<keyword id="KW-0560">Oxidoreductase</keyword>
<evidence type="ECO:0000255" key="1">
    <source>
        <dbReference type="HAMAP-Rule" id="MF_01621"/>
    </source>
</evidence>
<sequence>MIYEGKAITVKALESGIVELKFDLKGESVNKFNRLTLNELRQAVEAIQADASVKGVIVSSGKDVFIVGADITEFVDNFKLPEAELVAGNLEANRIFNAFEDLEVPTVAAINGIALGGGLEMCLAADYRVMSNSAKIGLPEVKLGIYPGFGGTVRLPRLIGSDNAIEWIAAGKENRAEDALKVGAVDAVVAPELLLAGALDLIKRAISGELDYKAKRQPKLEKLKLNAIEQMMAFETAKGFVAGQAGPNYPAPVEAIKSIQKAANFGRDKALEVEAAGFAKLAKTSVAESLIGLFLNDQELKRKAKAHDEIAHDVKQAAVLGAGIMGGGIAYQSAVKGTPILMKDIREEAIQLGLNEASKLLGNRVEKGRLTPAKMAEALNAIRPTLSYGDFANVDIVVEAVVENPKVKQAVLAEVEGQVKDDAILASNTSTISINLLAKALKRPENFVGMHFFNPVHMMPLVEVIRGEKSSEVAVATTVAYAKKMGKNPIVVNDCPGFLVNRVLFPYFGGFAKLVSAGVDFVRIDKVMEKFGWPMGPAYLMDVVGIDTGHHGRDVMAEGFPDRMKDERRSAVDALYEANRLGQKNGKGFYAYETDKRGKPKKVFDATVLDVLKPIVFEQREVTDEDIINWMMVPLCLETVRCLEDGIVETAAEADMGLVYGIGFPPFRGGALRYIDSIGVAEFVALADQYADLGPLYHPTAKLREMAKNGQRFFN</sequence>
<protein>
    <recommendedName>
        <fullName evidence="1">Fatty acid oxidation complex subunit alpha</fullName>
    </recommendedName>
    <domain>
        <recommendedName>
            <fullName evidence="1">Enoyl-CoA hydratase/Delta(3)-cis-Delta(2)-trans-enoyl-CoA isomerase/3-hydroxybutyryl-CoA epimerase</fullName>
            <ecNumber evidence="1">4.2.1.17</ecNumber>
            <ecNumber evidence="1">5.1.2.3</ecNumber>
            <ecNumber evidence="1">5.3.3.8</ecNumber>
        </recommendedName>
    </domain>
    <domain>
        <recommendedName>
            <fullName evidence="1">3-hydroxyacyl-CoA dehydrogenase</fullName>
            <ecNumber evidence="1">1.1.1.35</ecNumber>
        </recommendedName>
    </domain>
</protein>
<reference key="1">
    <citation type="submission" date="2008-01" db="EMBL/GenBank/DDBJ databases">
        <title>Complete sequence of Pseudomonas putida GB-1.</title>
        <authorList>
            <consortium name="US DOE Joint Genome Institute"/>
            <person name="Copeland A."/>
            <person name="Lucas S."/>
            <person name="Lapidus A."/>
            <person name="Barry K."/>
            <person name="Glavina del Rio T."/>
            <person name="Dalin E."/>
            <person name="Tice H."/>
            <person name="Pitluck S."/>
            <person name="Bruce D."/>
            <person name="Goodwin L."/>
            <person name="Chertkov O."/>
            <person name="Brettin T."/>
            <person name="Detter J.C."/>
            <person name="Han C."/>
            <person name="Kuske C.R."/>
            <person name="Schmutz J."/>
            <person name="Larimer F."/>
            <person name="Land M."/>
            <person name="Hauser L."/>
            <person name="Kyrpides N."/>
            <person name="Kim E."/>
            <person name="McCarthy J.K."/>
            <person name="Richardson P."/>
        </authorList>
    </citation>
    <scope>NUCLEOTIDE SEQUENCE [LARGE SCALE GENOMIC DNA]</scope>
    <source>
        <strain>GB-1</strain>
    </source>
</reference>
<gene>
    <name evidence="1" type="primary">fadB</name>
    <name type="ordered locus">PputGB1_1676</name>
</gene>
<comment type="function">
    <text evidence="1">Involved in the aerobic and anaerobic degradation of long-chain fatty acids via beta-oxidation cycle. Catalyzes the formation of 3-oxoacyl-CoA from enoyl-CoA via L-3-hydroxyacyl-CoA. It can also use D-3-hydroxyacyl-CoA and cis-3-enoyl-CoA as substrate.</text>
</comment>
<comment type="catalytic activity">
    <reaction evidence="1">
        <text>a (3S)-3-hydroxyacyl-CoA + NAD(+) = a 3-oxoacyl-CoA + NADH + H(+)</text>
        <dbReference type="Rhea" id="RHEA:22432"/>
        <dbReference type="ChEBI" id="CHEBI:15378"/>
        <dbReference type="ChEBI" id="CHEBI:57318"/>
        <dbReference type="ChEBI" id="CHEBI:57540"/>
        <dbReference type="ChEBI" id="CHEBI:57945"/>
        <dbReference type="ChEBI" id="CHEBI:90726"/>
        <dbReference type="EC" id="1.1.1.35"/>
    </reaction>
</comment>
<comment type="catalytic activity">
    <reaction evidence="1">
        <text>a (3S)-3-hydroxyacyl-CoA = a (2E)-enoyl-CoA + H2O</text>
        <dbReference type="Rhea" id="RHEA:16105"/>
        <dbReference type="ChEBI" id="CHEBI:15377"/>
        <dbReference type="ChEBI" id="CHEBI:57318"/>
        <dbReference type="ChEBI" id="CHEBI:58856"/>
        <dbReference type="EC" id="4.2.1.17"/>
    </reaction>
</comment>
<comment type="catalytic activity">
    <reaction evidence="1">
        <text>a 4-saturated-(3S)-3-hydroxyacyl-CoA = a (3E)-enoyl-CoA + H2O</text>
        <dbReference type="Rhea" id="RHEA:20724"/>
        <dbReference type="ChEBI" id="CHEBI:15377"/>
        <dbReference type="ChEBI" id="CHEBI:58521"/>
        <dbReference type="ChEBI" id="CHEBI:137480"/>
        <dbReference type="EC" id="4.2.1.17"/>
    </reaction>
</comment>
<comment type="catalytic activity">
    <reaction evidence="1">
        <text>(3S)-3-hydroxybutanoyl-CoA = (3R)-3-hydroxybutanoyl-CoA</text>
        <dbReference type="Rhea" id="RHEA:21760"/>
        <dbReference type="ChEBI" id="CHEBI:57315"/>
        <dbReference type="ChEBI" id="CHEBI:57316"/>
        <dbReference type="EC" id="5.1.2.3"/>
    </reaction>
</comment>
<comment type="catalytic activity">
    <reaction evidence="1">
        <text>a (3Z)-enoyl-CoA = a 4-saturated (2E)-enoyl-CoA</text>
        <dbReference type="Rhea" id="RHEA:45900"/>
        <dbReference type="ChEBI" id="CHEBI:85097"/>
        <dbReference type="ChEBI" id="CHEBI:85489"/>
        <dbReference type="EC" id="5.3.3.8"/>
    </reaction>
</comment>
<comment type="catalytic activity">
    <reaction evidence="1">
        <text>a (3E)-enoyl-CoA = a 4-saturated (2E)-enoyl-CoA</text>
        <dbReference type="Rhea" id="RHEA:45228"/>
        <dbReference type="ChEBI" id="CHEBI:58521"/>
        <dbReference type="ChEBI" id="CHEBI:85097"/>
        <dbReference type="EC" id="5.3.3.8"/>
    </reaction>
</comment>
<comment type="pathway">
    <text evidence="1">Lipid metabolism; fatty acid beta-oxidation.</text>
</comment>
<comment type="subunit">
    <text evidence="1">Heterotetramer of two alpha chains (FadB) and two beta chains (FadA).</text>
</comment>
<comment type="similarity">
    <text evidence="1">In the N-terminal section; belongs to the enoyl-CoA hydratase/isomerase family.</text>
</comment>
<comment type="similarity">
    <text evidence="1">In the C-terminal section; belongs to the 3-hydroxyacyl-CoA dehydrogenase family.</text>
</comment>
<name>FADB_PSEPG</name>
<accession>B0KH74</accession>
<proteinExistence type="inferred from homology"/>
<organism>
    <name type="scientific">Pseudomonas putida (strain GB-1)</name>
    <dbReference type="NCBI Taxonomy" id="76869"/>
    <lineage>
        <taxon>Bacteria</taxon>
        <taxon>Pseudomonadati</taxon>
        <taxon>Pseudomonadota</taxon>
        <taxon>Gammaproteobacteria</taxon>
        <taxon>Pseudomonadales</taxon>
        <taxon>Pseudomonadaceae</taxon>
        <taxon>Pseudomonas</taxon>
    </lineage>
</organism>
<dbReference type="EC" id="4.2.1.17" evidence="1"/>
<dbReference type="EC" id="5.1.2.3" evidence="1"/>
<dbReference type="EC" id="5.3.3.8" evidence="1"/>
<dbReference type="EC" id="1.1.1.35" evidence="1"/>
<dbReference type="EMBL" id="CP000926">
    <property type="protein sequence ID" value="ABY97579.1"/>
    <property type="molecule type" value="Genomic_DNA"/>
</dbReference>
<dbReference type="RefSeq" id="WP_012271342.1">
    <property type="nucleotide sequence ID" value="NC_010322.1"/>
</dbReference>
<dbReference type="SMR" id="B0KH74"/>
<dbReference type="KEGG" id="ppg:PputGB1_1676"/>
<dbReference type="eggNOG" id="COG1024">
    <property type="taxonomic scope" value="Bacteria"/>
</dbReference>
<dbReference type="eggNOG" id="COG1250">
    <property type="taxonomic scope" value="Bacteria"/>
</dbReference>
<dbReference type="HOGENOM" id="CLU_009834_16_3_6"/>
<dbReference type="UniPathway" id="UPA00659"/>
<dbReference type="Proteomes" id="UP000002157">
    <property type="component" value="Chromosome"/>
</dbReference>
<dbReference type="GO" id="GO:0036125">
    <property type="term" value="C:fatty acid beta-oxidation multienzyme complex"/>
    <property type="evidence" value="ECO:0007669"/>
    <property type="project" value="InterPro"/>
</dbReference>
<dbReference type="GO" id="GO:0008692">
    <property type="term" value="F:3-hydroxybutyryl-CoA epimerase activity"/>
    <property type="evidence" value="ECO:0007669"/>
    <property type="project" value="UniProtKB-UniRule"/>
</dbReference>
<dbReference type="GO" id="GO:0004165">
    <property type="term" value="F:delta(3)-delta(2)-enoyl-CoA isomerase activity"/>
    <property type="evidence" value="ECO:0007669"/>
    <property type="project" value="UniProtKB-UniRule"/>
</dbReference>
<dbReference type="GO" id="GO:0004300">
    <property type="term" value="F:enoyl-CoA hydratase activity"/>
    <property type="evidence" value="ECO:0007669"/>
    <property type="project" value="UniProtKB-UniRule"/>
</dbReference>
<dbReference type="GO" id="GO:0016509">
    <property type="term" value="F:long-chain-3-hydroxyacyl-CoA dehydrogenase activity"/>
    <property type="evidence" value="ECO:0007669"/>
    <property type="project" value="TreeGrafter"/>
</dbReference>
<dbReference type="GO" id="GO:0070403">
    <property type="term" value="F:NAD+ binding"/>
    <property type="evidence" value="ECO:0007669"/>
    <property type="project" value="InterPro"/>
</dbReference>
<dbReference type="GO" id="GO:0006635">
    <property type="term" value="P:fatty acid beta-oxidation"/>
    <property type="evidence" value="ECO:0007669"/>
    <property type="project" value="UniProtKB-UniRule"/>
</dbReference>
<dbReference type="CDD" id="cd06558">
    <property type="entry name" value="crotonase-like"/>
    <property type="match status" value="1"/>
</dbReference>
<dbReference type="FunFam" id="1.10.1040.50:FF:000001">
    <property type="entry name" value="Fatty acid oxidation complex subunit alpha"/>
    <property type="match status" value="1"/>
</dbReference>
<dbReference type="FunFam" id="3.90.226.10:FF:000018">
    <property type="entry name" value="Fatty acid oxidation complex subunit alpha"/>
    <property type="match status" value="1"/>
</dbReference>
<dbReference type="FunFam" id="3.40.50.720:FF:000009">
    <property type="entry name" value="Fatty oxidation complex, alpha subunit"/>
    <property type="match status" value="1"/>
</dbReference>
<dbReference type="Gene3D" id="1.10.1040.50">
    <property type="match status" value="1"/>
</dbReference>
<dbReference type="Gene3D" id="3.90.226.10">
    <property type="entry name" value="2-enoyl-CoA Hydratase, Chain A, domain 1"/>
    <property type="match status" value="1"/>
</dbReference>
<dbReference type="Gene3D" id="3.40.50.720">
    <property type="entry name" value="NAD(P)-binding Rossmann-like Domain"/>
    <property type="match status" value="1"/>
</dbReference>
<dbReference type="HAMAP" id="MF_01621">
    <property type="entry name" value="FadB"/>
    <property type="match status" value="1"/>
</dbReference>
<dbReference type="InterPro" id="IPR006180">
    <property type="entry name" value="3-OHacyl-CoA_DH_CS"/>
</dbReference>
<dbReference type="InterPro" id="IPR006176">
    <property type="entry name" value="3-OHacyl-CoA_DH_NAD-bd"/>
</dbReference>
<dbReference type="InterPro" id="IPR006108">
    <property type="entry name" value="3HC_DH_C"/>
</dbReference>
<dbReference type="InterPro" id="IPR008927">
    <property type="entry name" value="6-PGluconate_DH-like_C_sf"/>
</dbReference>
<dbReference type="InterPro" id="IPR029045">
    <property type="entry name" value="ClpP/crotonase-like_dom_sf"/>
</dbReference>
<dbReference type="InterPro" id="IPR018376">
    <property type="entry name" value="Enoyl-CoA_hyd/isom_CS"/>
</dbReference>
<dbReference type="InterPro" id="IPR001753">
    <property type="entry name" value="Enoyl-CoA_hydra/iso"/>
</dbReference>
<dbReference type="InterPro" id="IPR050136">
    <property type="entry name" value="FA_oxidation_alpha_subunit"/>
</dbReference>
<dbReference type="InterPro" id="IPR012799">
    <property type="entry name" value="FadB"/>
</dbReference>
<dbReference type="InterPro" id="IPR036291">
    <property type="entry name" value="NAD(P)-bd_dom_sf"/>
</dbReference>
<dbReference type="NCBIfam" id="TIGR02437">
    <property type="entry name" value="FadB"/>
    <property type="match status" value="1"/>
</dbReference>
<dbReference type="NCBIfam" id="NF008727">
    <property type="entry name" value="PRK11730.1"/>
    <property type="match status" value="1"/>
</dbReference>
<dbReference type="PANTHER" id="PTHR43612">
    <property type="entry name" value="TRIFUNCTIONAL ENZYME SUBUNIT ALPHA"/>
    <property type="match status" value="1"/>
</dbReference>
<dbReference type="PANTHER" id="PTHR43612:SF3">
    <property type="entry name" value="TRIFUNCTIONAL ENZYME SUBUNIT ALPHA, MITOCHONDRIAL"/>
    <property type="match status" value="1"/>
</dbReference>
<dbReference type="Pfam" id="PF00725">
    <property type="entry name" value="3HCDH"/>
    <property type="match status" value="1"/>
</dbReference>
<dbReference type="Pfam" id="PF02737">
    <property type="entry name" value="3HCDH_N"/>
    <property type="match status" value="1"/>
</dbReference>
<dbReference type="Pfam" id="PF00378">
    <property type="entry name" value="ECH_1"/>
    <property type="match status" value="1"/>
</dbReference>
<dbReference type="SUPFAM" id="SSF48179">
    <property type="entry name" value="6-phosphogluconate dehydrogenase C-terminal domain-like"/>
    <property type="match status" value="2"/>
</dbReference>
<dbReference type="SUPFAM" id="SSF52096">
    <property type="entry name" value="ClpP/crotonase"/>
    <property type="match status" value="1"/>
</dbReference>
<dbReference type="SUPFAM" id="SSF51735">
    <property type="entry name" value="NAD(P)-binding Rossmann-fold domains"/>
    <property type="match status" value="1"/>
</dbReference>
<dbReference type="PROSITE" id="PS00067">
    <property type="entry name" value="3HCDH"/>
    <property type="match status" value="1"/>
</dbReference>
<dbReference type="PROSITE" id="PS00166">
    <property type="entry name" value="ENOYL_COA_HYDRATASE"/>
    <property type="match status" value="1"/>
</dbReference>